<organism>
    <name type="scientific">Neisseria meningitidis serogroup A / serotype 4A (strain DSM 15465 / Z2491)</name>
    <dbReference type="NCBI Taxonomy" id="122587"/>
    <lineage>
        <taxon>Bacteria</taxon>
        <taxon>Pseudomonadati</taxon>
        <taxon>Pseudomonadota</taxon>
        <taxon>Betaproteobacteria</taxon>
        <taxon>Neisseriales</taxon>
        <taxon>Neisseriaceae</taxon>
        <taxon>Neisseria</taxon>
    </lineage>
</organism>
<proteinExistence type="inferred from homology"/>
<protein>
    <recommendedName>
        <fullName>ATP phosphoribosyltransferase</fullName>
        <shortName>ATP-PRT</shortName>
        <shortName>ATP-PRTase</shortName>
        <ecNumber>2.4.2.17</ecNumber>
    </recommendedName>
</protein>
<feature type="chain" id="PRO_0000151918" description="ATP phosphoribosyltransferase">
    <location>
        <begin position="1"/>
        <end position="217"/>
    </location>
</feature>
<comment type="function">
    <text evidence="1">Catalyzes the condensation of ATP and 5-phosphoribose 1-diphosphate to form N'-(5'-phosphoribosyl)-ATP (PR-ATP). Has a crucial role in the pathway because the rate of histidine biosynthesis seems to be controlled primarily by regulation of HisG enzymatic activity (By similarity).</text>
</comment>
<comment type="catalytic activity">
    <reaction>
        <text>1-(5-phospho-beta-D-ribosyl)-ATP + diphosphate = 5-phospho-alpha-D-ribose 1-diphosphate + ATP</text>
        <dbReference type="Rhea" id="RHEA:18473"/>
        <dbReference type="ChEBI" id="CHEBI:30616"/>
        <dbReference type="ChEBI" id="CHEBI:33019"/>
        <dbReference type="ChEBI" id="CHEBI:58017"/>
        <dbReference type="ChEBI" id="CHEBI:73183"/>
        <dbReference type="EC" id="2.4.2.17"/>
    </reaction>
</comment>
<comment type="pathway">
    <text>Amino-acid biosynthesis; L-histidine biosynthesis; L-histidine from 5-phospho-alpha-D-ribose 1-diphosphate: step 1/9.</text>
</comment>
<comment type="subunit">
    <text evidence="1">Heteromultimer composed of HisG and HisZ subunits.</text>
</comment>
<comment type="subcellular location">
    <subcellularLocation>
        <location evidence="1">Cytoplasm</location>
    </subcellularLocation>
</comment>
<comment type="domain">
    <text>Lacks the C-terminal regulatory region which is replaced by HisZ.</text>
</comment>
<comment type="similarity">
    <text evidence="2">Belongs to the ATP phosphoribosyltransferase family. Short subfamily.</text>
</comment>
<sequence length="217" mass="23263">MQDNALTIALSKGRIFEETLPLLAAAGIVPTEEPEKSRKLIIGTNHENIRLVIVRATDVPTYVRYGAADFGIAGKDVLIEHGGTGLYRPLDLEIAKCRMMVAVRKGFDYEAASQPGCRLKIATKYPEIAASHFAGKGVHVDIIKLYGSMELAPLVGLSDAIVDLVSTGNTLKANGLEAVEHIVDISSRLVVNKAALKTKYALLEPIIQAFGGAVKAK</sequence>
<dbReference type="EC" id="2.4.2.17"/>
<dbReference type="EMBL" id="AL157959">
    <property type="protein sequence ID" value="CAM08895.1"/>
    <property type="molecule type" value="Genomic_DNA"/>
</dbReference>
<dbReference type="RefSeq" id="WP_002261539.1">
    <property type="nucleotide sequence ID" value="NC_003116.1"/>
</dbReference>
<dbReference type="SMR" id="P64346"/>
<dbReference type="EnsemblBacteria" id="CAM08895">
    <property type="protein sequence ID" value="CAM08895"/>
    <property type="gene ID" value="NMA1768"/>
</dbReference>
<dbReference type="GeneID" id="93387808"/>
<dbReference type="KEGG" id="nma:NMA1768"/>
<dbReference type="HOGENOM" id="CLU_038115_2_0_4"/>
<dbReference type="UniPathway" id="UPA00031">
    <property type="reaction ID" value="UER00006"/>
</dbReference>
<dbReference type="Proteomes" id="UP000000626">
    <property type="component" value="Chromosome"/>
</dbReference>
<dbReference type="GO" id="GO:0005737">
    <property type="term" value="C:cytoplasm"/>
    <property type="evidence" value="ECO:0007669"/>
    <property type="project" value="UniProtKB-SubCell"/>
</dbReference>
<dbReference type="GO" id="GO:0005524">
    <property type="term" value="F:ATP binding"/>
    <property type="evidence" value="ECO:0007669"/>
    <property type="project" value="UniProtKB-KW"/>
</dbReference>
<dbReference type="GO" id="GO:0003879">
    <property type="term" value="F:ATP phosphoribosyltransferase activity"/>
    <property type="evidence" value="ECO:0007669"/>
    <property type="project" value="UniProtKB-UniRule"/>
</dbReference>
<dbReference type="GO" id="GO:0000105">
    <property type="term" value="P:L-histidine biosynthetic process"/>
    <property type="evidence" value="ECO:0007669"/>
    <property type="project" value="UniProtKB-UniRule"/>
</dbReference>
<dbReference type="CDD" id="cd13595">
    <property type="entry name" value="PBP2_HisGs"/>
    <property type="match status" value="1"/>
</dbReference>
<dbReference type="FunFam" id="3.40.190.10:FF:000011">
    <property type="entry name" value="ATP phosphoribosyltransferase"/>
    <property type="match status" value="1"/>
</dbReference>
<dbReference type="Gene3D" id="3.40.190.10">
    <property type="entry name" value="Periplasmic binding protein-like II"/>
    <property type="match status" value="2"/>
</dbReference>
<dbReference type="HAMAP" id="MF_01018">
    <property type="entry name" value="HisG_Short"/>
    <property type="match status" value="1"/>
</dbReference>
<dbReference type="InterPro" id="IPR013820">
    <property type="entry name" value="ATP_PRibTrfase_cat"/>
</dbReference>
<dbReference type="InterPro" id="IPR018198">
    <property type="entry name" value="ATP_PRibTrfase_CS"/>
</dbReference>
<dbReference type="InterPro" id="IPR001348">
    <property type="entry name" value="ATP_PRibTrfase_HisG"/>
</dbReference>
<dbReference type="InterPro" id="IPR024893">
    <property type="entry name" value="ATP_PRibTrfase_HisG_short"/>
</dbReference>
<dbReference type="NCBIfam" id="TIGR00070">
    <property type="entry name" value="hisG"/>
    <property type="match status" value="1"/>
</dbReference>
<dbReference type="PANTHER" id="PTHR21403:SF8">
    <property type="entry name" value="ATP PHOSPHORIBOSYLTRANSFERASE"/>
    <property type="match status" value="1"/>
</dbReference>
<dbReference type="PANTHER" id="PTHR21403">
    <property type="entry name" value="ATP PHOSPHORIBOSYLTRANSFERASE ATP-PRTASE"/>
    <property type="match status" value="1"/>
</dbReference>
<dbReference type="Pfam" id="PF01634">
    <property type="entry name" value="HisG"/>
    <property type="match status" value="1"/>
</dbReference>
<dbReference type="SUPFAM" id="SSF53850">
    <property type="entry name" value="Periplasmic binding protein-like II"/>
    <property type="match status" value="1"/>
</dbReference>
<dbReference type="PROSITE" id="PS01316">
    <property type="entry name" value="ATP_P_PHORIBOSYLTR"/>
    <property type="match status" value="1"/>
</dbReference>
<reference key="1">
    <citation type="journal article" date="2000" name="Nature">
        <title>Complete DNA sequence of a serogroup A strain of Neisseria meningitidis Z2491.</title>
        <authorList>
            <person name="Parkhill J."/>
            <person name="Achtman M."/>
            <person name="James K.D."/>
            <person name="Bentley S.D."/>
            <person name="Churcher C.M."/>
            <person name="Klee S.R."/>
            <person name="Morelli G."/>
            <person name="Basham D."/>
            <person name="Brown D."/>
            <person name="Chillingworth T."/>
            <person name="Davies R.M."/>
            <person name="Davis P."/>
            <person name="Devlin K."/>
            <person name="Feltwell T."/>
            <person name="Hamlin N."/>
            <person name="Holroyd S."/>
            <person name="Jagels K."/>
            <person name="Leather S."/>
            <person name="Moule S."/>
            <person name="Mungall K.L."/>
            <person name="Quail M.A."/>
            <person name="Rajandream M.A."/>
            <person name="Rutherford K.M."/>
            <person name="Simmonds M."/>
            <person name="Skelton J."/>
            <person name="Whitehead S."/>
            <person name="Spratt B.G."/>
            <person name="Barrell B.G."/>
        </authorList>
    </citation>
    <scope>NUCLEOTIDE SEQUENCE [LARGE SCALE GENOMIC DNA]</scope>
    <source>
        <strain>DSM 15465 / Z2491</strain>
    </source>
</reference>
<accession>P64346</accession>
<accession>A1ISY3</accession>
<accession>Q9JQS2</accession>
<keyword id="KW-0028">Amino-acid biosynthesis</keyword>
<keyword id="KW-0067">ATP-binding</keyword>
<keyword id="KW-0963">Cytoplasm</keyword>
<keyword id="KW-0328">Glycosyltransferase</keyword>
<keyword id="KW-0368">Histidine biosynthesis</keyword>
<keyword id="KW-0547">Nucleotide-binding</keyword>
<keyword id="KW-0808">Transferase</keyword>
<evidence type="ECO:0000250" key="1"/>
<evidence type="ECO:0000305" key="2"/>
<gene>
    <name type="primary">hisG</name>
    <name type="ordered locus">NMA1768</name>
</gene>
<name>HIS1_NEIMA</name>